<keyword id="KW-0028">Amino-acid biosynthesis</keyword>
<keyword id="KW-0067">ATP-binding</keyword>
<keyword id="KW-0963">Cytoplasm</keyword>
<keyword id="KW-0368">Histidine biosynthesis</keyword>
<keyword id="KW-0378">Hydrolase</keyword>
<keyword id="KW-0547">Nucleotide-binding</keyword>
<feature type="chain" id="PRO_1000149042" description="Phosphoribosyl-ATP pyrophosphatase">
    <location>
        <begin position="1"/>
        <end position="87"/>
    </location>
</feature>
<organism>
    <name type="scientific">Pseudarthrobacter chlorophenolicus (strain ATCC 700700 / DSM 12829 / CIP 107037 / JCM 12360 / KCTC 9906 / NCIMB 13794 / A6)</name>
    <name type="common">Arthrobacter chlorophenolicus</name>
    <dbReference type="NCBI Taxonomy" id="452863"/>
    <lineage>
        <taxon>Bacteria</taxon>
        <taxon>Bacillati</taxon>
        <taxon>Actinomycetota</taxon>
        <taxon>Actinomycetes</taxon>
        <taxon>Micrococcales</taxon>
        <taxon>Micrococcaceae</taxon>
        <taxon>Pseudarthrobacter</taxon>
    </lineage>
</organism>
<sequence>MKNFETLFAELSEKAATRPEGSRTVAELDSGVHGIGKKVVEEAAEVWMAAEYESDEAAAEEISQLLYHLQVLMLAKGLTLEDVYKHL</sequence>
<dbReference type="EC" id="3.6.1.31" evidence="1"/>
<dbReference type="EMBL" id="CP001341">
    <property type="protein sequence ID" value="ACL39661.1"/>
    <property type="molecule type" value="Genomic_DNA"/>
</dbReference>
<dbReference type="RefSeq" id="WP_015936881.1">
    <property type="nucleotide sequence ID" value="NC_011886.1"/>
</dbReference>
<dbReference type="SMR" id="B8H6U0"/>
<dbReference type="STRING" id="452863.Achl_1674"/>
<dbReference type="KEGG" id="ach:Achl_1674"/>
<dbReference type="eggNOG" id="COG0140">
    <property type="taxonomic scope" value="Bacteria"/>
</dbReference>
<dbReference type="HOGENOM" id="CLU_123337_2_1_11"/>
<dbReference type="OrthoDB" id="3212875at2"/>
<dbReference type="UniPathway" id="UPA00031">
    <property type="reaction ID" value="UER00007"/>
</dbReference>
<dbReference type="Proteomes" id="UP000002505">
    <property type="component" value="Chromosome"/>
</dbReference>
<dbReference type="GO" id="GO:0005737">
    <property type="term" value="C:cytoplasm"/>
    <property type="evidence" value="ECO:0007669"/>
    <property type="project" value="UniProtKB-SubCell"/>
</dbReference>
<dbReference type="GO" id="GO:0005524">
    <property type="term" value="F:ATP binding"/>
    <property type="evidence" value="ECO:0007669"/>
    <property type="project" value="UniProtKB-KW"/>
</dbReference>
<dbReference type="GO" id="GO:0004636">
    <property type="term" value="F:phosphoribosyl-ATP diphosphatase activity"/>
    <property type="evidence" value="ECO:0007669"/>
    <property type="project" value="UniProtKB-UniRule"/>
</dbReference>
<dbReference type="GO" id="GO:0000105">
    <property type="term" value="P:L-histidine biosynthetic process"/>
    <property type="evidence" value="ECO:0007669"/>
    <property type="project" value="UniProtKB-UniRule"/>
</dbReference>
<dbReference type="CDD" id="cd11547">
    <property type="entry name" value="NTP-PPase_HisE"/>
    <property type="match status" value="1"/>
</dbReference>
<dbReference type="Gene3D" id="1.10.287.1080">
    <property type="entry name" value="MazG-like"/>
    <property type="match status" value="1"/>
</dbReference>
<dbReference type="HAMAP" id="MF_01020">
    <property type="entry name" value="HisE"/>
    <property type="match status" value="1"/>
</dbReference>
<dbReference type="InterPro" id="IPR008179">
    <property type="entry name" value="HisE"/>
</dbReference>
<dbReference type="InterPro" id="IPR021130">
    <property type="entry name" value="PRib-ATP_PPHydrolase-like"/>
</dbReference>
<dbReference type="NCBIfam" id="TIGR03188">
    <property type="entry name" value="histidine_hisI"/>
    <property type="match status" value="1"/>
</dbReference>
<dbReference type="NCBIfam" id="NF001610">
    <property type="entry name" value="PRK00400.1-1"/>
    <property type="match status" value="1"/>
</dbReference>
<dbReference type="PANTHER" id="PTHR42945">
    <property type="entry name" value="HISTIDINE BIOSYNTHESIS BIFUNCTIONAL PROTEIN"/>
    <property type="match status" value="1"/>
</dbReference>
<dbReference type="PANTHER" id="PTHR42945:SF1">
    <property type="entry name" value="HISTIDINE BIOSYNTHESIS BIFUNCTIONAL PROTEIN HIS7"/>
    <property type="match status" value="1"/>
</dbReference>
<dbReference type="Pfam" id="PF01503">
    <property type="entry name" value="PRA-PH"/>
    <property type="match status" value="1"/>
</dbReference>
<dbReference type="SUPFAM" id="SSF101386">
    <property type="entry name" value="all-alpha NTP pyrophosphatases"/>
    <property type="match status" value="1"/>
</dbReference>
<proteinExistence type="inferred from homology"/>
<comment type="catalytic activity">
    <reaction evidence="1">
        <text>1-(5-phospho-beta-D-ribosyl)-ATP + H2O = 1-(5-phospho-beta-D-ribosyl)-5'-AMP + diphosphate + H(+)</text>
        <dbReference type="Rhea" id="RHEA:22828"/>
        <dbReference type="ChEBI" id="CHEBI:15377"/>
        <dbReference type="ChEBI" id="CHEBI:15378"/>
        <dbReference type="ChEBI" id="CHEBI:33019"/>
        <dbReference type="ChEBI" id="CHEBI:59457"/>
        <dbReference type="ChEBI" id="CHEBI:73183"/>
        <dbReference type="EC" id="3.6.1.31"/>
    </reaction>
</comment>
<comment type="pathway">
    <text evidence="1">Amino-acid biosynthesis; L-histidine biosynthesis; L-histidine from 5-phospho-alpha-D-ribose 1-diphosphate: step 2/9.</text>
</comment>
<comment type="subcellular location">
    <subcellularLocation>
        <location evidence="1">Cytoplasm</location>
    </subcellularLocation>
</comment>
<comment type="similarity">
    <text evidence="1">Belongs to the PRA-PH family.</text>
</comment>
<name>HIS2_PSECP</name>
<gene>
    <name evidence="1" type="primary">hisE</name>
    <name type="ordered locus">Achl_1674</name>
</gene>
<accession>B8H6U0</accession>
<reference key="1">
    <citation type="submission" date="2009-01" db="EMBL/GenBank/DDBJ databases">
        <title>Complete sequence of chromosome of Arthrobacter chlorophenolicus A6.</title>
        <authorList>
            <consortium name="US DOE Joint Genome Institute"/>
            <person name="Lucas S."/>
            <person name="Copeland A."/>
            <person name="Lapidus A."/>
            <person name="Glavina del Rio T."/>
            <person name="Tice H."/>
            <person name="Bruce D."/>
            <person name="Goodwin L."/>
            <person name="Pitluck S."/>
            <person name="Goltsman E."/>
            <person name="Clum A."/>
            <person name="Larimer F."/>
            <person name="Land M."/>
            <person name="Hauser L."/>
            <person name="Kyrpides N."/>
            <person name="Mikhailova N."/>
            <person name="Jansson J."/>
            <person name="Richardson P."/>
        </authorList>
    </citation>
    <scope>NUCLEOTIDE SEQUENCE [LARGE SCALE GENOMIC DNA]</scope>
    <source>
        <strain>ATCC 700700 / DSM 12829 / CIP 107037 / JCM 12360 / KCTC 9906 / NCIMB 13794 / A6</strain>
    </source>
</reference>
<protein>
    <recommendedName>
        <fullName evidence="1">Phosphoribosyl-ATP pyrophosphatase</fullName>
        <shortName evidence="1">PRA-PH</shortName>
        <ecNumber evidence="1">3.6.1.31</ecNumber>
    </recommendedName>
</protein>
<evidence type="ECO:0000255" key="1">
    <source>
        <dbReference type="HAMAP-Rule" id="MF_01020"/>
    </source>
</evidence>